<keyword id="KW-0378">Hydrolase</keyword>
<keyword id="KW-0479">Metal-binding</keyword>
<keyword id="KW-0546">Nucleotide metabolism</keyword>
<keyword id="KW-0862">Zinc</keyword>
<sequence length="333" mass="36394">MIDTTLPLTDIHRHLDGNIRPQTILELGRQYNISLPAQSLETLIPHVQVIANEPDLVSFLTKLDWGVKVLASLDACRRVAFENIEDAARNGLRYVELRFSPGYMAMAHKLPVAGVVEAVIDGVREGCRTFGVQAKLIGIMSRTFGEAACQQELEAFLAHRDQITALDLAGDELGFPGSLFLSHFNRARDAGWHITVHAGEAAGPESIWQAIRELGAERIGHGVKAIEDRALMDFLAEQQIGIESCLTSNIQTSTVAELAAHPLKTFLEHGIRASINTDDPGVQGVDIIHEYTVAAPAAGLSREQIRQAQINGLEMAFLSAEEKRALREKVAAK</sequence>
<name>ADD_SHIF8</name>
<gene>
    <name evidence="1" type="primary">add</name>
    <name type="ordered locus">SFV_1640</name>
</gene>
<evidence type="ECO:0000255" key="1">
    <source>
        <dbReference type="HAMAP-Rule" id="MF_00540"/>
    </source>
</evidence>
<feature type="chain" id="PRO_1000017706" description="Adenosine deaminase">
    <location>
        <begin position="1"/>
        <end position="333"/>
    </location>
</feature>
<feature type="active site" description="Proton donor" evidence="1">
    <location>
        <position position="200"/>
    </location>
</feature>
<feature type="binding site" evidence="1">
    <location>
        <position position="12"/>
    </location>
    <ligand>
        <name>Zn(2+)</name>
        <dbReference type="ChEBI" id="CHEBI:29105"/>
        <note>catalytic</note>
    </ligand>
</feature>
<feature type="binding site" evidence="1">
    <location>
        <position position="14"/>
    </location>
    <ligand>
        <name>substrate</name>
    </ligand>
</feature>
<feature type="binding site" evidence="1">
    <location>
        <position position="14"/>
    </location>
    <ligand>
        <name>Zn(2+)</name>
        <dbReference type="ChEBI" id="CHEBI:29105"/>
        <note>catalytic</note>
    </ligand>
</feature>
<feature type="binding site" evidence="1">
    <location>
        <position position="16"/>
    </location>
    <ligand>
        <name>substrate</name>
    </ligand>
</feature>
<feature type="binding site" evidence="1">
    <location>
        <position position="170"/>
    </location>
    <ligand>
        <name>substrate</name>
    </ligand>
</feature>
<feature type="binding site" evidence="1">
    <location>
        <position position="197"/>
    </location>
    <ligand>
        <name>Zn(2+)</name>
        <dbReference type="ChEBI" id="CHEBI:29105"/>
        <note>catalytic</note>
    </ligand>
</feature>
<feature type="binding site" evidence="1">
    <location>
        <position position="278"/>
    </location>
    <ligand>
        <name>Zn(2+)</name>
        <dbReference type="ChEBI" id="CHEBI:29105"/>
        <note>catalytic</note>
    </ligand>
</feature>
<feature type="binding site" evidence="1">
    <location>
        <position position="279"/>
    </location>
    <ligand>
        <name>substrate</name>
    </ligand>
</feature>
<feature type="site" description="Important for catalytic activity" evidence="1">
    <location>
        <position position="221"/>
    </location>
</feature>
<proteinExistence type="inferred from homology"/>
<reference key="1">
    <citation type="journal article" date="2006" name="BMC Genomics">
        <title>Complete genome sequence of Shigella flexneri 5b and comparison with Shigella flexneri 2a.</title>
        <authorList>
            <person name="Nie H."/>
            <person name="Yang F."/>
            <person name="Zhang X."/>
            <person name="Yang J."/>
            <person name="Chen L."/>
            <person name="Wang J."/>
            <person name="Xiong Z."/>
            <person name="Peng J."/>
            <person name="Sun L."/>
            <person name="Dong J."/>
            <person name="Xue Y."/>
            <person name="Xu X."/>
            <person name="Chen S."/>
            <person name="Yao Z."/>
            <person name="Shen Y."/>
            <person name="Jin Q."/>
        </authorList>
    </citation>
    <scope>NUCLEOTIDE SEQUENCE [LARGE SCALE GENOMIC DNA]</scope>
    <source>
        <strain>8401</strain>
    </source>
</reference>
<comment type="function">
    <text evidence="1">Catalyzes the hydrolytic deamination of adenosine and 2-deoxyadenosine.</text>
</comment>
<comment type="catalytic activity">
    <reaction evidence="1">
        <text>adenosine + H2O + H(+) = inosine + NH4(+)</text>
        <dbReference type="Rhea" id="RHEA:24408"/>
        <dbReference type="ChEBI" id="CHEBI:15377"/>
        <dbReference type="ChEBI" id="CHEBI:15378"/>
        <dbReference type="ChEBI" id="CHEBI:16335"/>
        <dbReference type="ChEBI" id="CHEBI:17596"/>
        <dbReference type="ChEBI" id="CHEBI:28938"/>
        <dbReference type="EC" id="3.5.4.4"/>
    </reaction>
    <physiologicalReaction direction="left-to-right" evidence="1">
        <dbReference type="Rhea" id="RHEA:24409"/>
    </physiologicalReaction>
</comment>
<comment type="catalytic activity">
    <reaction evidence="1">
        <text>2'-deoxyadenosine + H2O + H(+) = 2'-deoxyinosine + NH4(+)</text>
        <dbReference type="Rhea" id="RHEA:28190"/>
        <dbReference type="ChEBI" id="CHEBI:15377"/>
        <dbReference type="ChEBI" id="CHEBI:15378"/>
        <dbReference type="ChEBI" id="CHEBI:17256"/>
        <dbReference type="ChEBI" id="CHEBI:28938"/>
        <dbReference type="ChEBI" id="CHEBI:28997"/>
        <dbReference type="EC" id="3.5.4.4"/>
    </reaction>
    <physiologicalReaction direction="left-to-right" evidence="1">
        <dbReference type="Rhea" id="RHEA:28191"/>
    </physiologicalReaction>
</comment>
<comment type="cofactor">
    <cofactor evidence="1">
        <name>Zn(2+)</name>
        <dbReference type="ChEBI" id="CHEBI:29105"/>
    </cofactor>
    <text evidence="1">Binds 1 zinc ion per subunit.</text>
</comment>
<comment type="similarity">
    <text evidence="1">Belongs to the metallo-dependent hydrolases superfamily. Adenosine and AMP deaminases family. Adenosine deaminase subfamily.</text>
</comment>
<dbReference type="EC" id="3.5.4.4" evidence="1"/>
<dbReference type="EMBL" id="CP000266">
    <property type="protein sequence ID" value="ABF03811.1"/>
    <property type="molecule type" value="Genomic_DNA"/>
</dbReference>
<dbReference type="RefSeq" id="WP_000567518.1">
    <property type="nucleotide sequence ID" value="NC_008258.1"/>
</dbReference>
<dbReference type="SMR" id="Q0T4F4"/>
<dbReference type="KEGG" id="sfv:SFV_1640"/>
<dbReference type="HOGENOM" id="CLU_039228_0_2_6"/>
<dbReference type="Proteomes" id="UP000000659">
    <property type="component" value="Chromosome"/>
</dbReference>
<dbReference type="GO" id="GO:0005829">
    <property type="term" value="C:cytosol"/>
    <property type="evidence" value="ECO:0007669"/>
    <property type="project" value="TreeGrafter"/>
</dbReference>
<dbReference type="GO" id="GO:0046936">
    <property type="term" value="F:2'-deoxyadenosine deaminase activity"/>
    <property type="evidence" value="ECO:0007669"/>
    <property type="project" value="RHEA"/>
</dbReference>
<dbReference type="GO" id="GO:0004000">
    <property type="term" value="F:adenosine deaminase activity"/>
    <property type="evidence" value="ECO:0007669"/>
    <property type="project" value="UniProtKB-UniRule"/>
</dbReference>
<dbReference type="GO" id="GO:0008270">
    <property type="term" value="F:zinc ion binding"/>
    <property type="evidence" value="ECO:0007669"/>
    <property type="project" value="UniProtKB-UniRule"/>
</dbReference>
<dbReference type="GO" id="GO:0006154">
    <property type="term" value="P:adenosine catabolic process"/>
    <property type="evidence" value="ECO:0007669"/>
    <property type="project" value="TreeGrafter"/>
</dbReference>
<dbReference type="GO" id="GO:0043103">
    <property type="term" value="P:hypoxanthine salvage"/>
    <property type="evidence" value="ECO:0007669"/>
    <property type="project" value="TreeGrafter"/>
</dbReference>
<dbReference type="GO" id="GO:0046103">
    <property type="term" value="P:inosine biosynthetic process"/>
    <property type="evidence" value="ECO:0007669"/>
    <property type="project" value="TreeGrafter"/>
</dbReference>
<dbReference type="GO" id="GO:0009117">
    <property type="term" value="P:nucleotide metabolic process"/>
    <property type="evidence" value="ECO:0007669"/>
    <property type="project" value="UniProtKB-KW"/>
</dbReference>
<dbReference type="GO" id="GO:0009168">
    <property type="term" value="P:purine ribonucleoside monophosphate biosynthetic process"/>
    <property type="evidence" value="ECO:0007669"/>
    <property type="project" value="UniProtKB-UniRule"/>
</dbReference>
<dbReference type="CDD" id="cd01320">
    <property type="entry name" value="ADA"/>
    <property type="match status" value="1"/>
</dbReference>
<dbReference type="FunFam" id="3.20.20.140:FF:000009">
    <property type="entry name" value="Adenosine deaminase"/>
    <property type="match status" value="1"/>
</dbReference>
<dbReference type="Gene3D" id="3.20.20.140">
    <property type="entry name" value="Metal-dependent hydrolases"/>
    <property type="match status" value="1"/>
</dbReference>
<dbReference type="HAMAP" id="MF_00540">
    <property type="entry name" value="A_deaminase"/>
    <property type="match status" value="1"/>
</dbReference>
<dbReference type="InterPro" id="IPR006650">
    <property type="entry name" value="A/AMP_deam_AS"/>
</dbReference>
<dbReference type="InterPro" id="IPR028893">
    <property type="entry name" value="A_deaminase"/>
</dbReference>
<dbReference type="InterPro" id="IPR001365">
    <property type="entry name" value="A_deaminase_dom"/>
</dbReference>
<dbReference type="InterPro" id="IPR006330">
    <property type="entry name" value="Ado/ade_deaminase"/>
</dbReference>
<dbReference type="InterPro" id="IPR032466">
    <property type="entry name" value="Metal_Hydrolase"/>
</dbReference>
<dbReference type="NCBIfam" id="TIGR01430">
    <property type="entry name" value="aden_deam"/>
    <property type="match status" value="1"/>
</dbReference>
<dbReference type="NCBIfam" id="NF006846">
    <property type="entry name" value="PRK09358.1-1"/>
    <property type="match status" value="1"/>
</dbReference>
<dbReference type="PANTHER" id="PTHR11409">
    <property type="entry name" value="ADENOSINE DEAMINASE"/>
    <property type="match status" value="1"/>
</dbReference>
<dbReference type="PANTHER" id="PTHR11409:SF43">
    <property type="entry name" value="ADENOSINE DEAMINASE"/>
    <property type="match status" value="1"/>
</dbReference>
<dbReference type="Pfam" id="PF00962">
    <property type="entry name" value="A_deaminase"/>
    <property type="match status" value="1"/>
</dbReference>
<dbReference type="SUPFAM" id="SSF51556">
    <property type="entry name" value="Metallo-dependent hydrolases"/>
    <property type="match status" value="1"/>
</dbReference>
<dbReference type="PROSITE" id="PS00485">
    <property type="entry name" value="A_DEAMINASE"/>
    <property type="match status" value="1"/>
</dbReference>
<protein>
    <recommendedName>
        <fullName evidence="1">Adenosine deaminase</fullName>
        <ecNumber evidence="1">3.5.4.4</ecNumber>
    </recommendedName>
    <alternativeName>
        <fullName evidence="1">Adenosine aminohydrolase</fullName>
    </alternativeName>
</protein>
<organism>
    <name type="scientific">Shigella flexneri serotype 5b (strain 8401)</name>
    <dbReference type="NCBI Taxonomy" id="373384"/>
    <lineage>
        <taxon>Bacteria</taxon>
        <taxon>Pseudomonadati</taxon>
        <taxon>Pseudomonadota</taxon>
        <taxon>Gammaproteobacteria</taxon>
        <taxon>Enterobacterales</taxon>
        <taxon>Enterobacteriaceae</taxon>
        <taxon>Shigella</taxon>
    </lineage>
</organism>
<accession>Q0T4F4</accession>